<evidence type="ECO:0000255" key="1">
    <source>
        <dbReference type="HAMAP-Rule" id="MF_00211"/>
    </source>
</evidence>
<proteinExistence type="inferred from homology"/>
<reference key="1">
    <citation type="journal article" date="2003" name="Nat. Genet.">
        <title>Comparative analysis of the genome sequences of Bordetella pertussis, Bordetella parapertussis and Bordetella bronchiseptica.</title>
        <authorList>
            <person name="Parkhill J."/>
            <person name="Sebaihia M."/>
            <person name="Preston A."/>
            <person name="Murphy L.D."/>
            <person name="Thomson N.R."/>
            <person name="Harris D.E."/>
            <person name="Holden M.T.G."/>
            <person name="Churcher C.M."/>
            <person name="Bentley S.D."/>
            <person name="Mungall K.L."/>
            <person name="Cerdeno-Tarraga A.-M."/>
            <person name="Temple L."/>
            <person name="James K.D."/>
            <person name="Harris B."/>
            <person name="Quail M.A."/>
            <person name="Achtman M."/>
            <person name="Atkin R."/>
            <person name="Baker S."/>
            <person name="Basham D."/>
            <person name="Bason N."/>
            <person name="Cherevach I."/>
            <person name="Chillingworth T."/>
            <person name="Collins M."/>
            <person name="Cronin A."/>
            <person name="Davis P."/>
            <person name="Doggett J."/>
            <person name="Feltwell T."/>
            <person name="Goble A."/>
            <person name="Hamlin N."/>
            <person name="Hauser H."/>
            <person name="Holroyd S."/>
            <person name="Jagels K."/>
            <person name="Leather S."/>
            <person name="Moule S."/>
            <person name="Norberczak H."/>
            <person name="O'Neil S."/>
            <person name="Ormond D."/>
            <person name="Price C."/>
            <person name="Rabbinowitsch E."/>
            <person name="Rutter S."/>
            <person name="Sanders M."/>
            <person name="Saunders D."/>
            <person name="Seeger K."/>
            <person name="Sharp S."/>
            <person name="Simmonds M."/>
            <person name="Skelton J."/>
            <person name="Squares R."/>
            <person name="Squares S."/>
            <person name="Stevens K."/>
            <person name="Unwin L."/>
            <person name="Whitehead S."/>
            <person name="Barrell B.G."/>
            <person name="Maskell D.J."/>
        </authorList>
    </citation>
    <scope>NUCLEOTIDE SEQUENCE [LARGE SCALE GENOMIC DNA]</scope>
    <source>
        <strain>12822 / ATCC BAA-587 / NCTC 13253</strain>
    </source>
</reference>
<accession>Q7W388</accession>
<keyword id="KW-0028">Amino-acid biosynthesis</keyword>
<keyword id="KW-0057">Aromatic amino acid biosynthesis</keyword>
<keyword id="KW-0328">Glycosyltransferase</keyword>
<keyword id="KW-0460">Magnesium</keyword>
<keyword id="KW-0479">Metal-binding</keyword>
<keyword id="KW-0808">Transferase</keyword>
<keyword id="KW-0822">Tryptophan biosynthesis</keyword>
<feature type="chain" id="PRO_0000227137" description="Anthranilate phosphoribosyltransferase">
    <location>
        <begin position="1"/>
        <end position="343"/>
    </location>
</feature>
<feature type="binding site" evidence="1">
    <location>
        <position position="84"/>
    </location>
    <ligand>
        <name>5-phospho-alpha-D-ribose 1-diphosphate</name>
        <dbReference type="ChEBI" id="CHEBI:58017"/>
    </ligand>
</feature>
<feature type="binding site" evidence="1">
    <location>
        <position position="84"/>
    </location>
    <ligand>
        <name>anthranilate</name>
        <dbReference type="ChEBI" id="CHEBI:16567"/>
        <label>1</label>
    </ligand>
</feature>
<feature type="binding site" evidence="1">
    <location>
        <begin position="87"/>
        <end position="88"/>
    </location>
    <ligand>
        <name>5-phospho-alpha-D-ribose 1-diphosphate</name>
        <dbReference type="ChEBI" id="CHEBI:58017"/>
    </ligand>
</feature>
<feature type="binding site" evidence="1">
    <location>
        <position position="92"/>
    </location>
    <ligand>
        <name>5-phospho-alpha-D-ribose 1-diphosphate</name>
        <dbReference type="ChEBI" id="CHEBI:58017"/>
    </ligand>
</feature>
<feature type="binding site" evidence="1">
    <location>
        <begin position="94"/>
        <end position="97"/>
    </location>
    <ligand>
        <name>5-phospho-alpha-D-ribose 1-diphosphate</name>
        <dbReference type="ChEBI" id="CHEBI:58017"/>
    </ligand>
</feature>
<feature type="binding site" evidence="1">
    <location>
        <position position="96"/>
    </location>
    <ligand>
        <name>Mg(2+)</name>
        <dbReference type="ChEBI" id="CHEBI:18420"/>
        <label>1</label>
    </ligand>
</feature>
<feature type="binding site" evidence="1">
    <location>
        <begin position="112"/>
        <end position="120"/>
    </location>
    <ligand>
        <name>5-phospho-alpha-D-ribose 1-diphosphate</name>
        <dbReference type="ChEBI" id="CHEBI:58017"/>
    </ligand>
</feature>
<feature type="binding site" evidence="1">
    <location>
        <position position="115"/>
    </location>
    <ligand>
        <name>anthranilate</name>
        <dbReference type="ChEBI" id="CHEBI:16567"/>
        <label>1</label>
    </ligand>
</feature>
<feature type="binding site" evidence="1">
    <location>
        <position position="124"/>
    </location>
    <ligand>
        <name>5-phospho-alpha-D-ribose 1-diphosphate</name>
        <dbReference type="ChEBI" id="CHEBI:58017"/>
    </ligand>
</feature>
<feature type="binding site" evidence="1">
    <location>
        <position position="170"/>
    </location>
    <ligand>
        <name>anthranilate</name>
        <dbReference type="ChEBI" id="CHEBI:16567"/>
        <label>2</label>
    </ligand>
</feature>
<feature type="binding site" evidence="1">
    <location>
        <position position="229"/>
    </location>
    <ligand>
        <name>Mg(2+)</name>
        <dbReference type="ChEBI" id="CHEBI:18420"/>
        <label>2</label>
    </ligand>
</feature>
<feature type="binding site" evidence="1">
    <location>
        <position position="230"/>
    </location>
    <ligand>
        <name>Mg(2+)</name>
        <dbReference type="ChEBI" id="CHEBI:18420"/>
        <label>1</label>
    </ligand>
</feature>
<feature type="binding site" evidence="1">
    <location>
        <position position="230"/>
    </location>
    <ligand>
        <name>Mg(2+)</name>
        <dbReference type="ChEBI" id="CHEBI:18420"/>
        <label>2</label>
    </ligand>
</feature>
<protein>
    <recommendedName>
        <fullName evidence="1">Anthranilate phosphoribosyltransferase</fullName>
        <ecNumber evidence="1">2.4.2.18</ecNumber>
    </recommendedName>
</protein>
<gene>
    <name evidence="1" type="primary">trpD</name>
    <name type="ordered locus">BPP4158</name>
</gene>
<sequence>MTIAAAEALTRCIEHREIFHDEMLHLMRLLMRGELSPQIASALLMGLRVKKETVGEITAAAQVMREFATPVVTPNPQDLLDMCGTGGDGSHTFNISTTAMFVAAAAGVPIAKHGNRSASSSSGSADVLEALGANLQLTPEEVAECVAATGIGFMFAPAHHGAMKNVAAVRKELGVRTIFNILGPLTNPAGAANQLMGVFHPDLVGIQVRVLERLGSRHVLVVHGKDGMDEASLGAATMVGELKDGVVREYEIHPEDYGLSMMSNRGIKVSNREESRALVIEALDNVDGVARDIVALNAGLAIYAGNKADSIPEALALAFETISNGSARAKLEEFCAYTRKFQK</sequence>
<dbReference type="EC" id="2.4.2.18" evidence="1"/>
<dbReference type="EMBL" id="BX640435">
    <property type="protein sequence ID" value="CAE39437.1"/>
    <property type="molecule type" value="Genomic_DNA"/>
</dbReference>
<dbReference type="RefSeq" id="WP_003815392.1">
    <property type="nucleotide sequence ID" value="NC_002928.3"/>
</dbReference>
<dbReference type="SMR" id="Q7W388"/>
<dbReference type="GeneID" id="93205954"/>
<dbReference type="KEGG" id="bpa:BPP4158"/>
<dbReference type="HOGENOM" id="CLU_034315_2_1_4"/>
<dbReference type="UniPathway" id="UPA00035">
    <property type="reaction ID" value="UER00041"/>
</dbReference>
<dbReference type="Proteomes" id="UP000001421">
    <property type="component" value="Chromosome"/>
</dbReference>
<dbReference type="GO" id="GO:0005829">
    <property type="term" value="C:cytosol"/>
    <property type="evidence" value="ECO:0007669"/>
    <property type="project" value="TreeGrafter"/>
</dbReference>
<dbReference type="GO" id="GO:0004048">
    <property type="term" value="F:anthranilate phosphoribosyltransferase activity"/>
    <property type="evidence" value="ECO:0007669"/>
    <property type="project" value="UniProtKB-UniRule"/>
</dbReference>
<dbReference type="GO" id="GO:0000287">
    <property type="term" value="F:magnesium ion binding"/>
    <property type="evidence" value="ECO:0007669"/>
    <property type="project" value="UniProtKB-UniRule"/>
</dbReference>
<dbReference type="GO" id="GO:0000162">
    <property type="term" value="P:L-tryptophan biosynthetic process"/>
    <property type="evidence" value="ECO:0007669"/>
    <property type="project" value="UniProtKB-UniRule"/>
</dbReference>
<dbReference type="FunFam" id="3.40.1030.10:FF:000002">
    <property type="entry name" value="Anthranilate phosphoribosyltransferase"/>
    <property type="match status" value="1"/>
</dbReference>
<dbReference type="Gene3D" id="3.40.1030.10">
    <property type="entry name" value="Nucleoside phosphorylase/phosphoribosyltransferase catalytic domain"/>
    <property type="match status" value="1"/>
</dbReference>
<dbReference type="Gene3D" id="1.20.970.10">
    <property type="entry name" value="Transferase, Pyrimidine Nucleoside Phosphorylase, Chain C"/>
    <property type="match status" value="1"/>
</dbReference>
<dbReference type="HAMAP" id="MF_00211">
    <property type="entry name" value="TrpD"/>
    <property type="match status" value="1"/>
</dbReference>
<dbReference type="InterPro" id="IPR005940">
    <property type="entry name" value="Anthranilate_Pribosyl_Tfrase"/>
</dbReference>
<dbReference type="InterPro" id="IPR000312">
    <property type="entry name" value="Glycosyl_Trfase_fam3"/>
</dbReference>
<dbReference type="InterPro" id="IPR017459">
    <property type="entry name" value="Glycosyl_Trfase_fam3_N_dom"/>
</dbReference>
<dbReference type="InterPro" id="IPR036320">
    <property type="entry name" value="Glycosyl_Trfase_fam3_N_dom_sf"/>
</dbReference>
<dbReference type="InterPro" id="IPR035902">
    <property type="entry name" value="Nuc_phospho_transferase"/>
</dbReference>
<dbReference type="NCBIfam" id="TIGR01245">
    <property type="entry name" value="trpD"/>
    <property type="match status" value="1"/>
</dbReference>
<dbReference type="PANTHER" id="PTHR43285">
    <property type="entry name" value="ANTHRANILATE PHOSPHORIBOSYLTRANSFERASE"/>
    <property type="match status" value="1"/>
</dbReference>
<dbReference type="PANTHER" id="PTHR43285:SF2">
    <property type="entry name" value="ANTHRANILATE PHOSPHORIBOSYLTRANSFERASE"/>
    <property type="match status" value="1"/>
</dbReference>
<dbReference type="Pfam" id="PF02885">
    <property type="entry name" value="Glycos_trans_3N"/>
    <property type="match status" value="1"/>
</dbReference>
<dbReference type="Pfam" id="PF00591">
    <property type="entry name" value="Glycos_transf_3"/>
    <property type="match status" value="1"/>
</dbReference>
<dbReference type="SUPFAM" id="SSF52418">
    <property type="entry name" value="Nucleoside phosphorylase/phosphoribosyltransferase catalytic domain"/>
    <property type="match status" value="1"/>
</dbReference>
<dbReference type="SUPFAM" id="SSF47648">
    <property type="entry name" value="Nucleoside phosphorylase/phosphoribosyltransferase N-terminal domain"/>
    <property type="match status" value="1"/>
</dbReference>
<comment type="function">
    <text evidence="1">Catalyzes the transfer of the phosphoribosyl group of 5-phosphorylribose-1-pyrophosphate (PRPP) to anthranilate to yield N-(5'-phosphoribosyl)-anthranilate (PRA).</text>
</comment>
<comment type="catalytic activity">
    <reaction evidence="1">
        <text>N-(5-phospho-beta-D-ribosyl)anthranilate + diphosphate = 5-phospho-alpha-D-ribose 1-diphosphate + anthranilate</text>
        <dbReference type="Rhea" id="RHEA:11768"/>
        <dbReference type="ChEBI" id="CHEBI:16567"/>
        <dbReference type="ChEBI" id="CHEBI:18277"/>
        <dbReference type="ChEBI" id="CHEBI:33019"/>
        <dbReference type="ChEBI" id="CHEBI:58017"/>
        <dbReference type="EC" id="2.4.2.18"/>
    </reaction>
</comment>
<comment type="cofactor">
    <cofactor evidence="1">
        <name>Mg(2+)</name>
        <dbReference type="ChEBI" id="CHEBI:18420"/>
    </cofactor>
    <text evidence="1">Binds 2 magnesium ions per monomer.</text>
</comment>
<comment type="pathway">
    <text evidence="1">Amino-acid biosynthesis; L-tryptophan biosynthesis; L-tryptophan from chorismate: step 2/5.</text>
</comment>
<comment type="subunit">
    <text evidence="1">Homodimer.</text>
</comment>
<comment type="similarity">
    <text evidence="1">Belongs to the anthranilate phosphoribosyltransferase family.</text>
</comment>
<organism>
    <name type="scientific">Bordetella parapertussis (strain 12822 / ATCC BAA-587 / NCTC 13253)</name>
    <dbReference type="NCBI Taxonomy" id="257311"/>
    <lineage>
        <taxon>Bacteria</taxon>
        <taxon>Pseudomonadati</taxon>
        <taxon>Pseudomonadota</taxon>
        <taxon>Betaproteobacteria</taxon>
        <taxon>Burkholderiales</taxon>
        <taxon>Alcaligenaceae</taxon>
        <taxon>Bordetella</taxon>
    </lineage>
</organism>
<name>TRPD_BORPA</name>